<organism>
    <name type="scientific">Rickettsia akari (strain Hartford)</name>
    <dbReference type="NCBI Taxonomy" id="293614"/>
    <lineage>
        <taxon>Bacteria</taxon>
        <taxon>Pseudomonadati</taxon>
        <taxon>Pseudomonadota</taxon>
        <taxon>Alphaproteobacteria</taxon>
        <taxon>Rickettsiales</taxon>
        <taxon>Rickettsiaceae</taxon>
        <taxon>Rickettsieae</taxon>
        <taxon>Rickettsia</taxon>
        <taxon>spotted fever group</taxon>
    </lineage>
</organism>
<keyword id="KW-0963">Cytoplasm</keyword>
<keyword id="KW-0489">Methyltransferase</keyword>
<keyword id="KW-0694">RNA-binding</keyword>
<keyword id="KW-0698">rRNA processing</keyword>
<keyword id="KW-0949">S-adenosyl-L-methionine</keyword>
<keyword id="KW-0808">Transferase</keyword>
<gene>
    <name evidence="1" type="primary">rsmA</name>
    <name evidence="1" type="synonym">ksgA</name>
    <name type="ordered locus">A1C_05200</name>
</gene>
<name>RSMA_RICAH</name>
<feature type="chain" id="PRO_1000056661" description="Ribosomal RNA small subunit methyltransferase A">
    <location>
        <begin position="1"/>
        <end position="273"/>
    </location>
</feature>
<feature type="binding site" evidence="1">
    <location>
        <position position="23"/>
    </location>
    <ligand>
        <name>S-adenosyl-L-methionine</name>
        <dbReference type="ChEBI" id="CHEBI:59789"/>
    </ligand>
</feature>
<feature type="binding site" evidence="1">
    <location>
        <position position="25"/>
    </location>
    <ligand>
        <name>S-adenosyl-L-methionine</name>
        <dbReference type="ChEBI" id="CHEBI:59789"/>
    </ligand>
</feature>
<feature type="binding site" evidence="1">
    <location>
        <position position="50"/>
    </location>
    <ligand>
        <name>S-adenosyl-L-methionine</name>
        <dbReference type="ChEBI" id="CHEBI:59789"/>
    </ligand>
</feature>
<feature type="binding site" evidence="1">
    <location>
        <position position="72"/>
    </location>
    <ligand>
        <name>S-adenosyl-L-methionine</name>
        <dbReference type="ChEBI" id="CHEBI:59789"/>
    </ligand>
</feature>
<feature type="binding site" evidence="1">
    <location>
        <position position="97"/>
    </location>
    <ligand>
        <name>S-adenosyl-L-methionine</name>
        <dbReference type="ChEBI" id="CHEBI:59789"/>
    </ligand>
</feature>
<feature type="binding site" evidence="1">
    <location>
        <position position="116"/>
    </location>
    <ligand>
        <name>S-adenosyl-L-methionine</name>
        <dbReference type="ChEBI" id="CHEBI:59789"/>
    </ligand>
</feature>
<protein>
    <recommendedName>
        <fullName evidence="1">Ribosomal RNA small subunit methyltransferase A</fullName>
        <ecNumber evidence="1">2.1.1.182</ecNumber>
    </recommendedName>
    <alternativeName>
        <fullName evidence="1">16S rRNA (adenine(1518)-N(6)/adenine(1519)-N(6))-dimethyltransferase</fullName>
    </alternativeName>
    <alternativeName>
        <fullName evidence="1">16S rRNA dimethyladenosine transferase</fullName>
    </alternativeName>
    <alternativeName>
        <fullName evidence="1">16S rRNA dimethylase</fullName>
    </alternativeName>
    <alternativeName>
        <fullName evidence="1">S-adenosylmethionine-6-N', N'-adenosyl(rRNA) dimethyltransferase</fullName>
    </alternativeName>
</protein>
<evidence type="ECO:0000255" key="1">
    <source>
        <dbReference type="HAMAP-Rule" id="MF_00607"/>
    </source>
</evidence>
<reference key="1">
    <citation type="submission" date="2007-09" db="EMBL/GenBank/DDBJ databases">
        <title>Complete genome sequence of Rickettsia akari.</title>
        <authorList>
            <person name="Madan A."/>
            <person name="Fahey J."/>
            <person name="Helton E."/>
            <person name="Ketteman M."/>
            <person name="Madan A."/>
            <person name="Rodrigues S."/>
            <person name="Sanchez A."/>
            <person name="Whiting M."/>
            <person name="Dasch G."/>
            <person name="Eremeeva M."/>
        </authorList>
    </citation>
    <scope>NUCLEOTIDE SEQUENCE [LARGE SCALE GENOMIC DNA]</scope>
    <source>
        <strain>Hartford</strain>
    </source>
</reference>
<sequence>MLPSIAKHVASHQINPLKKHGQNFIFDSSLCDKIVRASHLAENSRVLEIGPGTGGLTRSILQKNPESLTVIETDERFIPLLNEIKEYYPNLNIIKQDALKINLTDLDYDKVTIISNLPYHIGTELVIRWLKEARLITDMTLMLQKEVVERICAMPSTKAYGRLSVICQLIAKVEKCFDVSPTAFYPPPKVYSAIVKLIPLANPPSIALINRVEKITTFAFAGRRKMIKSSLKNLVPNIHEVLTQLKINDNYRAENLAPQDYLRIAMSLSVNKL</sequence>
<proteinExistence type="inferred from homology"/>
<comment type="function">
    <text evidence="1">Specifically dimethylates two adjacent adenosines (A1518 and A1519) in the loop of a conserved hairpin near the 3'-end of 16S rRNA in the 30S particle. May play a critical role in biogenesis of 30S subunits.</text>
</comment>
<comment type="catalytic activity">
    <reaction evidence="1">
        <text>adenosine(1518)/adenosine(1519) in 16S rRNA + 4 S-adenosyl-L-methionine = N(6)-dimethyladenosine(1518)/N(6)-dimethyladenosine(1519) in 16S rRNA + 4 S-adenosyl-L-homocysteine + 4 H(+)</text>
        <dbReference type="Rhea" id="RHEA:19609"/>
        <dbReference type="Rhea" id="RHEA-COMP:10232"/>
        <dbReference type="Rhea" id="RHEA-COMP:10233"/>
        <dbReference type="ChEBI" id="CHEBI:15378"/>
        <dbReference type="ChEBI" id="CHEBI:57856"/>
        <dbReference type="ChEBI" id="CHEBI:59789"/>
        <dbReference type="ChEBI" id="CHEBI:74411"/>
        <dbReference type="ChEBI" id="CHEBI:74493"/>
        <dbReference type="EC" id="2.1.1.182"/>
    </reaction>
</comment>
<comment type="subcellular location">
    <subcellularLocation>
        <location evidence="1">Cytoplasm</location>
    </subcellularLocation>
</comment>
<comment type="similarity">
    <text evidence="1">Belongs to the class I-like SAM-binding methyltransferase superfamily. rRNA adenine N(6)-methyltransferase family. RsmA subfamily.</text>
</comment>
<dbReference type="EC" id="2.1.1.182" evidence="1"/>
<dbReference type="EMBL" id="CP000847">
    <property type="protein sequence ID" value="ABV75292.1"/>
    <property type="molecule type" value="Genomic_DNA"/>
</dbReference>
<dbReference type="RefSeq" id="WP_012149922.1">
    <property type="nucleotide sequence ID" value="NC_009881.1"/>
</dbReference>
<dbReference type="SMR" id="A8GPG7"/>
<dbReference type="STRING" id="293614.A1C_05200"/>
<dbReference type="KEGG" id="rak:A1C_05200"/>
<dbReference type="eggNOG" id="COG0030">
    <property type="taxonomic scope" value="Bacteria"/>
</dbReference>
<dbReference type="HOGENOM" id="CLU_041220_0_1_5"/>
<dbReference type="Proteomes" id="UP000006830">
    <property type="component" value="Chromosome"/>
</dbReference>
<dbReference type="GO" id="GO:0005737">
    <property type="term" value="C:cytoplasm"/>
    <property type="evidence" value="ECO:0007669"/>
    <property type="project" value="UniProtKB-SubCell"/>
</dbReference>
<dbReference type="GO" id="GO:0052908">
    <property type="term" value="F:16S rRNA (adenine(1518)-N(6)/adenine(1519)-N(6))-dimethyltransferase activity"/>
    <property type="evidence" value="ECO:0007669"/>
    <property type="project" value="UniProtKB-EC"/>
</dbReference>
<dbReference type="GO" id="GO:0003723">
    <property type="term" value="F:RNA binding"/>
    <property type="evidence" value="ECO:0007669"/>
    <property type="project" value="UniProtKB-KW"/>
</dbReference>
<dbReference type="CDD" id="cd02440">
    <property type="entry name" value="AdoMet_MTases"/>
    <property type="match status" value="1"/>
</dbReference>
<dbReference type="FunFam" id="3.40.50.150:FF:000770">
    <property type="entry name" value="Ribosomal RNA small subunit methyltransferase A"/>
    <property type="match status" value="1"/>
</dbReference>
<dbReference type="Gene3D" id="1.10.8.100">
    <property type="entry name" value="Ribosomal RNA adenine dimethylase-like, domain 2"/>
    <property type="match status" value="1"/>
</dbReference>
<dbReference type="Gene3D" id="3.40.50.150">
    <property type="entry name" value="Vaccinia Virus protein VP39"/>
    <property type="match status" value="1"/>
</dbReference>
<dbReference type="HAMAP" id="MF_00607">
    <property type="entry name" value="16SrRNA_methyltr_A"/>
    <property type="match status" value="1"/>
</dbReference>
<dbReference type="InterPro" id="IPR001737">
    <property type="entry name" value="KsgA/Erm"/>
</dbReference>
<dbReference type="InterPro" id="IPR023165">
    <property type="entry name" value="rRNA_Ade_diMease-like_C"/>
</dbReference>
<dbReference type="InterPro" id="IPR020596">
    <property type="entry name" value="rRNA_Ade_Mease_Trfase_CS"/>
</dbReference>
<dbReference type="InterPro" id="IPR020598">
    <property type="entry name" value="rRNA_Ade_methylase_Trfase_N"/>
</dbReference>
<dbReference type="InterPro" id="IPR011530">
    <property type="entry name" value="rRNA_adenine_dimethylase"/>
</dbReference>
<dbReference type="InterPro" id="IPR029063">
    <property type="entry name" value="SAM-dependent_MTases_sf"/>
</dbReference>
<dbReference type="NCBIfam" id="TIGR00755">
    <property type="entry name" value="ksgA"/>
    <property type="match status" value="1"/>
</dbReference>
<dbReference type="PANTHER" id="PTHR11727">
    <property type="entry name" value="DIMETHYLADENOSINE TRANSFERASE"/>
    <property type="match status" value="1"/>
</dbReference>
<dbReference type="PANTHER" id="PTHR11727:SF7">
    <property type="entry name" value="DIMETHYLADENOSINE TRANSFERASE-RELATED"/>
    <property type="match status" value="1"/>
</dbReference>
<dbReference type="Pfam" id="PF00398">
    <property type="entry name" value="RrnaAD"/>
    <property type="match status" value="1"/>
</dbReference>
<dbReference type="SMART" id="SM00650">
    <property type="entry name" value="rADc"/>
    <property type="match status" value="1"/>
</dbReference>
<dbReference type="SUPFAM" id="SSF53335">
    <property type="entry name" value="S-adenosyl-L-methionine-dependent methyltransferases"/>
    <property type="match status" value="1"/>
</dbReference>
<dbReference type="PROSITE" id="PS01131">
    <property type="entry name" value="RRNA_A_DIMETH"/>
    <property type="match status" value="1"/>
</dbReference>
<dbReference type="PROSITE" id="PS51689">
    <property type="entry name" value="SAM_RNA_A_N6_MT"/>
    <property type="match status" value="1"/>
</dbReference>
<accession>A8GPG7</accession>